<protein>
    <recommendedName>
        <fullName evidence="1">Orotidine 5'-phosphate decarboxylase</fullName>
        <ecNumber evidence="1">4.1.1.23</ecNumber>
    </recommendedName>
    <alternativeName>
        <fullName evidence="1">OMP decarboxylase</fullName>
        <shortName evidence="1">OMPDCase</shortName>
        <shortName evidence="1">OMPdecase</shortName>
    </alternativeName>
</protein>
<comment type="function">
    <text evidence="1">Catalyzes the decarboxylation of orotidine 5'-monophosphate (OMP) to uridine 5'-monophosphate (UMP).</text>
</comment>
<comment type="catalytic activity">
    <reaction evidence="1">
        <text>orotidine 5'-phosphate + H(+) = UMP + CO2</text>
        <dbReference type="Rhea" id="RHEA:11596"/>
        <dbReference type="ChEBI" id="CHEBI:15378"/>
        <dbReference type="ChEBI" id="CHEBI:16526"/>
        <dbReference type="ChEBI" id="CHEBI:57538"/>
        <dbReference type="ChEBI" id="CHEBI:57865"/>
        <dbReference type="EC" id="4.1.1.23"/>
    </reaction>
</comment>
<comment type="pathway">
    <text evidence="1">Pyrimidine metabolism; UMP biosynthesis via de novo pathway; UMP from orotate: step 2/2.</text>
</comment>
<comment type="subunit">
    <text evidence="1">Homodimer.</text>
</comment>
<comment type="similarity">
    <text evidence="1">Belongs to the OMP decarboxylase family. Type 1 subfamily.</text>
</comment>
<organism>
    <name type="scientific">Pseudomonas putida (strain ATCC 47054 / DSM 6125 / CFBP 8728 / NCIMB 11950 / KT2440)</name>
    <dbReference type="NCBI Taxonomy" id="160488"/>
    <lineage>
        <taxon>Bacteria</taxon>
        <taxon>Pseudomonadati</taxon>
        <taxon>Pseudomonadota</taxon>
        <taxon>Gammaproteobacteria</taxon>
        <taxon>Pseudomonadales</taxon>
        <taxon>Pseudomonadaceae</taxon>
        <taxon>Pseudomonas</taxon>
    </lineage>
</organism>
<feature type="chain" id="PRO_0000134566" description="Orotidine 5'-phosphate decarboxylase">
    <location>
        <begin position="1"/>
        <end position="233"/>
    </location>
</feature>
<feature type="active site" description="Proton donor" evidence="1">
    <location>
        <position position="64"/>
    </location>
</feature>
<feature type="binding site" evidence="1">
    <location>
        <position position="13"/>
    </location>
    <ligand>
        <name>substrate</name>
    </ligand>
</feature>
<feature type="binding site" evidence="1">
    <location>
        <position position="35"/>
    </location>
    <ligand>
        <name>substrate</name>
    </ligand>
</feature>
<feature type="binding site" evidence="1">
    <location>
        <begin position="62"/>
        <end position="71"/>
    </location>
    <ligand>
        <name>substrate</name>
    </ligand>
</feature>
<feature type="binding site" evidence="1">
    <location>
        <position position="122"/>
    </location>
    <ligand>
        <name>substrate</name>
    </ligand>
</feature>
<feature type="binding site" evidence="1">
    <location>
        <position position="182"/>
    </location>
    <ligand>
        <name>substrate</name>
    </ligand>
</feature>
<feature type="binding site" evidence="1">
    <location>
        <position position="191"/>
    </location>
    <ligand>
        <name>substrate</name>
    </ligand>
</feature>
<feature type="binding site" evidence="1">
    <location>
        <position position="211"/>
    </location>
    <ligand>
        <name>substrate</name>
    </ligand>
</feature>
<feature type="binding site" evidence="1">
    <location>
        <position position="212"/>
    </location>
    <ligand>
        <name>substrate</name>
    </ligand>
</feature>
<dbReference type="EC" id="4.1.1.23" evidence="1"/>
<dbReference type="EMBL" id="AE015451">
    <property type="protein sequence ID" value="AAN67434.1"/>
    <property type="molecule type" value="Genomic_DNA"/>
</dbReference>
<dbReference type="RefSeq" id="NP_743970.1">
    <property type="nucleotide sequence ID" value="NC_002947.4"/>
</dbReference>
<dbReference type="RefSeq" id="WP_010952851.1">
    <property type="nucleotide sequence ID" value="NZ_CP169744.1"/>
</dbReference>
<dbReference type="SMR" id="Q88LW2"/>
<dbReference type="STRING" id="160488.PP_1815"/>
<dbReference type="PaxDb" id="160488-PP_1815"/>
<dbReference type="GeneID" id="83681648"/>
<dbReference type="KEGG" id="ppu:PP_1815"/>
<dbReference type="PATRIC" id="fig|160488.4.peg.1915"/>
<dbReference type="eggNOG" id="COG0284">
    <property type="taxonomic scope" value="Bacteria"/>
</dbReference>
<dbReference type="HOGENOM" id="CLU_067069_0_0_6"/>
<dbReference type="OrthoDB" id="9806203at2"/>
<dbReference type="PhylomeDB" id="Q88LW2"/>
<dbReference type="BioCyc" id="PPUT160488:G1G01-1920-MONOMER"/>
<dbReference type="UniPathway" id="UPA00070">
    <property type="reaction ID" value="UER00120"/>
</dbReference>
<dbReference type="Proteomes" id="UP000000556">
    <property type="component" value="Chromosome"/>
</dbReference>
<dbReference type="GO" id="GO:0005829">
    <property type="term" value="C:cytosol"/>
    <property type="evidence" value="ECO:0007669"/>
    <property type="project" value="TreeGrafter"/>
</dbReference>
<dbReference type="GO" id="GO:0004590">
    <property type="term" value="F:orotidine-5'-phosphate decarboxylase activity"/>
    <property type="evidence" value="ECO:0007669"/>
    <property type="project" value="UniProtKB-UniRule"/>
</dbReference>
<dbReference type="GO" id="GO:0006207">
    <property type="term" value="P:'de novo' pyrimidine nucleobase biosynthetic process"/>
    <property type="evidence" value="ECO:0007669"/>
    <property type="project" value="InterPro"/>
</dbReference>
<dbReference type="GO" id="GO:0044205">
    <property type="term" value="P:'de novo' UMP biosynthetic process"/>
    <property type="evidence" value="ECO:0007669"/>
    <property type="project" value="UniProtKB-UniRule"/>
</dbReference>
<dbReference type="CDD" id="cd04725">
    <property type="entry name" value="OMP_decarboxylase_like"/>
    <property type="match status" value="1"/>
</dbReference>
<dbReference type="FunFam" id="3.20.20.70:FF:000015">
    <property type="entry name" value="Orotidine 5'-phosphate decarboxylase"/>
    <property type="match status" value="1"/>
</dbReference>
<dbReference type="Gene3D" id="3.20.20.70">
    <property type="entry name" value="Aldolase class I"/>
    <property type="match status" value="1"/>
</dbReference>
<dbReference type="HAMAP" id="MF_01200_B">
    <property type="entry name" value="OMPdecase_type1_B"/>
    <property type="match status" value="1"/>
</dbReference>
<dbReference type="InterPro" id="IPR013785">
    <property type="entry name" value="Aldolase_TIM"/>
</dbReference>
<dbReference type="InterPro" id="IPR014732">
    <property type="entry name" value="OMPdecase"/>
</dbReference>
<dbReference type="InterPro" id="IPR018089">
    <property type="entry name" value="OMPdecase_AS"/>
</dbReference>
<dbReference type="InterPro" id="IPR047596">
    <property type="entry name" value="OMPdecase_bac"/>
</dbReference>
<dbReference type="InterPro" id="IPR001754">
    <property type="entry name" value="OMPdeCOase_dom"/>
</dbReference>
<dbReference type="InterPro" id="IPR011060">
    <property type="entry name" value="RibuloseP-bd_barrel"/>
</dbReference>
<dbReference type="NCBIfam" id="NF001273">
    <property type="entry name" value="PRK00230.1"/>
    <property type="match status" value="1"/>
</dbReference>
<dbReference type="NCBIfam" id="TIGR01740">
    <property type="entry name" value="pyrF"/>
    <property type="match status" value="1"/>
</dbReference>
<dbReference type="PANTHER" id="PTHR32119">
    <property type="entry name" value="OROTIDINE 5'-PHOSPHATE DECARBOXYLASE"/>
    <property type="match status" value="1"/>
</dbReference>
<dbReference type="PANTHER" id="PTHR32119:SF2">
    <property type="entry name" value="OROTIDINE 5'-PHOSPHATE DECARBOXYLASE"/>
    <property type="match status" value="1"/>
</dbReference>
<dbReference type="Pfam" id="PF00215">
    <property type="entry name" value="OMPdecase"/>
    <property type="match status" value="1"/>
</dbReference>
<dbReference type="SMART" id="SM00934">
    <property type="entry name" value="OMPdecase"/>
    <property type="match status" value="1"/>
</dbReference>
<dbReference type="SUPFAM" id="SSF51366">
    <property type="entry name" value="Ribulose-phoshate binding barrel"/>
    <property type="match status" value="1"/>
</dbReference>
<dbReference type="PROSITE" id="PS00156">
    <property type="entry name" value="OMPDECASE"/>
    <property type="match status" value="1"/>
</dbReference>
<keyword id="KW-0210">Decarboxylase</keyword>
<keyword id="KW-0456">Lyase</keyword>
<keyword id="KW-0665">Pyrimidine biosynthesis</keyword>
<keyword id="KW-1185">Reference proteome</keyword>
<sequence>MSACQTPLIVALDFPTREAALKLADQLDPALCRVKVGKELFTSSASGIVETLCDKGFEVFLDLKFHDIPNTTAMAVKAAAEMGVWMVNVHCSGGLRMMAACREELAKRSGPQPLLIGVTVLTSMEREDLAGIGLDVDPQEQVLRLAALAEKAGMDGLVCSALEAPALKAAHPSLQLVTPGIRPAGSAQDDQRRILTPRQALDAGSDYLVIGRPISQAADPAQALAAVVAEIRG</sequence>
<name>PYRF_PSEPK</name>
<accession>Q88LW2</accession>
<evidence type="ECO:0000255" key="1">
    <source>
        <dbReference type="HAMAP-Rule" id="MF_01200"/>
    </source>
</evidence>
<proteinExistence type="inferred from homology"/>
<gene>
    <name evidence="1" type="primary">pyrF</name>
    <name type="ordered locus">PP_1815</name>
</gene>
<reference key="1">
    <citation type="journal article" date="2002" name="Environ. Microbiol.">
        <title>Complete genome sequence and comparative analysis of the metabolically versatile Pseudomonas putida KT2440.</title>
        <authorList>
            <person name="Nelson K.E."/>
            <person name="Weinel C."/>
            <person name="Paulsen I.T."/>
            <person name="Dodson R.J."/>
            <person name="Hilbert H."/>
            <person name="Martins dos Santos V.A.P."/>
            <person name="Fouts D.E."/>
            <person name="Gill S.R."/>
            <person name="Pop M."/>
            <person name="Holmes M."/>
            <person name="Brinkac L.M."/>
            <person name="Beanan M.J."/>
            <person name="DeBoy R.T."/>
            <person name="Daugherty S.C."/>
            <person name="Kolonay J.F."/>
            <person name="Madupu R."/>
            <person name="Nelson W.C."/>
            <person name="White O."/>
            <person name="Peterson J.D."/>
            <person name="Khouri H.M."/>
            <person name="Hance I."/>
            <person name="Chris Lee P."/>
            <person name="Holtzapple E.K."/>
            <person name="Scanlan D."/>
            <person name="Tran K."/>
            <person name="Moazzez A."/>
            <person name="Utterback T.R."/>
            <person name="Rizzo M."/>
            <person name="Lee K."/>
            <person name="Kosack D."/>
            <person name="Moestl D."/>
            <person name="Wedler H."/>
            <person name="Lauber J."/>
            <person name="Stjepandic D."/>
            <person name="Hoheisel J."/>
            <person name="Straetz M."/>
            <person name="Heim S."/>
            <person name="Kiewitz C."/>
            <person name="Eisen J.A."/>
            <person name="Timmis K.N."/>
            <person name="Duesterhoeft A."/>
            <person name="Tuemmler B."/>
            <person name="Fraser C.M."/>
        </authorList>
    </citation>
    <scope>NUCLEOTIDE SEQUENCE [LARGE SCALE GENOMIC DNA]</scope>
    <source>
        <strain>ATCC 47054 / DSM 6125 / CFBP 8728 / NCIMB 11950 / KT2440</strain>
    </source>
</reference>